<proteinExistence type="inferred from homology"/>
<gene>
    <name evidence="1" type="primary">dnaJ</name>
    <name type="ordered locus">Mpe_A2499</name>
</gene>
<evidence type="ECO:0000255" key="1">
    <source>
        <dbReference type="HAMAP-Rule" id="MF_01152"/>
    </source>
</evidence>
<evidence type="ECO:0000256" key="2">
    <source>
        <dbReference type="SAM" id="MobiDB-lite"/>
    </source>
</evidence>
<name>DNAJ_METPP</name>
<accession>A2SIR5</accession>
<dbReference type="EMBL" id="CP000555">
    <property type="protein sequence ID" value="ABM95454.1"/>
    <property type="molecule type" value="Genomic_DNA"/>
</dbReference>
<dbReference type="RefSeq" id="WP_011830087.1">
    <property type="nucleotide sequence ID" value="NC_008825.1"/>
</dbReference>
<dbReference type="SMR" id="A2SIR5"/>
<dbReference type="STRING" id="420662.Mpe_A2499"/>
<dbReference type="KEGG" id="mpt:Mpe_A2499"/>
<dbReference type="eggNOG" id="COG0484">
    <property type="taxonomic scope" value="Bacteria"/>
</dbReference>
<dbReference type="HOGENOM" id="CLU_017633_0_7_4"/>
<dbReference type="Proteomes" id="UP000000366">
    <property type="component" value="Chromosome"/>
</dbReference>
<dbReference type="GO" id="GO:0005737">
    <property type="term" value="C:cytoplasm"/>
    <property type="evidence" value="ECO:0007669"/>
    <property type="project" value="UniProtKB-SubCell"/>
</dbReference>
<dbReference type="GO" id="GO:0005524">
    <property type="term" value="F:ATP binding"/>
    <property type="evidence" value="ECO:0007669"/>
    <property type="project" value="InterPro"/>
</dbReference>
<dbReference type="GO" id="GO:0031072">
    <property type="term" value="F:heat shock protein binding"/>
    <property type="evidence" value="ECO:0007669"/>
    <property type="project" value="InterPro"/>
</dbReference>
<dbReference type="GO" id="GO:0051082">
    <property type="term" value="F:unfolded protein binding"/>
    <property type="evidence" value="ECO:0007669"/>
    <property type="project" value="UniProtKB-UniRule"/>
</dbReference>
<dbReference type="GO" id="GO:0008270">
    <property type="term" value="F:zinc ion binding"/>
    <property type="evidence" value="ECO:0007669"/>
    <property type="project" value="UniProtKB-UniRule"/>
</dbReference>
<dbReference type="GO" id="GO:0051085">
    <property type="term" value="P:chaperone cofactor-dependent protein refolding"/>
    <property type="evidence" value="ECO:0007669"/>
    <property type="project" value="TreeGrafter"/>
</dbReference>
<dbReference type="GO" id="GO:0006260">
    <property type="term" value="P:DNA replication"/>
    <property type="evidence" value="ECO:0007669"/>
    <property type="project" value="UniProtKB-KW"/>
</dbReference>
<dbReference type="GO" id="GO:0042026">
    <property type="term" value="P:protein refolding"/>
    <property type="evidence" value="ECO:0007669"/>
    <property type="project" value="TreeGrafter"/>
</dbReference>
<dbReference type="GO" id="GO:0009408">
    <property type="term" value="P:response to heat"/>
    <property type="evidence" value="ECO:0007669"/>
    <property type="project" value="InterPro"/>
</dbReference>
<dbReference type="CDD" id="cd06257">
    <property type="entry name" value="DnaJ"/>
    <property type="match status" value="1"/>
</dbReference>
<dbReference type="CDD" id="cd10747">
    <property type="entry name" value="DnaJ_C"/>
    <property type="match status" value="1"/>
</dbReference>
<dbReference type="CDD" id="cd10719">
    <property type="entry name" value="DnaJ_zf"/>
    <property type="match status" value="1"/>
</dbReference>
<dbReference type="FunFam" id="1.10.287.110:FF:000034">
    <property type="entry name" value="Chaperone protein DnaJ"/>
    <property type="match status" value="1"/>
</dbReference>
<dbReference type="FunFam" id="2.10.230.10:FF:000002">
    <property type="entry name" value="Molecular chaperone DnaJ"/>
    <property type="match status" value="1"/>
</dbReference>
<dbReference type="FunFam" id="2.60.260.20:FF:000004">
    <property type="entry name" value="Molecular chaperone DnaJ"/>
    <property type="match status" value="1"/>
</dbReference>
<dbReference type="Gene3D" id="1.10.287.110">
    <property type="entry name" value="DnaJ domain"/>
    <property type="match status" value="1"/>
</dbReference>
<dbReference type="Gene3D" id="2.10.230.10">
    <property type="entry name" value="Heat shock protein DnaJ, cysteine-rich domain"/>
    <property type="match status" value="1"/>
</dbReference>
<dbReference type="Gene3D" id="2.60.260.20">
    <property type="entry name" value="Urease metallochaperone UreE, N-terminal domain"/>
    <property type="match status" value="2"/>
</dbReference>
<dbReference type="HAMAP" id="MF_01152">
    <property type="entry name" value="DnaJ"/>
    <property type="match status" value="1"/>
</dbReference>
<dbReference type="InterPro" id="IPR012724">
    <property type="entry name" value="DnaJ"/>
</dbReference>
<dbReference type="InterPro" id="IPR002939">
    <property type="entry name" value="DnaJ_C"/>
</dbReference>
<dbReference type="InterPro" id="IPR001623">
    <property type="entry name" value="DnaJ_domain"/>
</dbReference>
<dbReference type="InterPro" id="IPR018253">
    <property type="entry name" value="DnaJ_domain_CS"/>
</dbReference>
<dbReference type="InterPro" id="IPR008971">
    <property type="entry name" value="HSP40/DnaJ_pept-bd"/>
</dbReference>
<dbReference type="InterPro" id="IPR001305">
    <property type="entry name" value="HSP_DnaJ_Cys-rich_dom"/>
</dbReference>
<dbReference type="InterPro" id="IPR036410">
    <property type="entry name" value="HSP_DnaJ_Cys-rich_dom_sf"/>
</dbReference>
<dbReference type="InterPro" id="IPR036869">
    <property type="entry name" value="J_dom_sf"/>
</dbReference>
<dbReference type="NCBIfam" id="TIGR02349">
    <property type="entry name" value="DnaJ_bact"/>
    <property type="match status" value="1"/>
</dbReference>
<dbReference type="NCBIfam" id="NF008035">
    <property type="entry name" value="PRK10767.1"/>
    <property type="match status" value="1"/>
</dbReference>
<dbReference type="PANTHER" id="PTHR43096:SF48">
    <property type="entry name" value="CHAPERONE PROTEIN DNAJ"/>
    <property type="match status" value="1"/>
</dbReference>
<dbReference type="PANTHER" id="PTHR43096">
    <property type="entry name" value="DNAJ HOMOLOG 1, MITOCHONDRIAL-RELATED"/>
    <property type="match status" value="1"/>
</dbReference>
<dbReference type="Pfam" id="PF00226">
    <property type="entry name" value="DnaJ"/>
    <property type="match status" value="1"/>
</dbReference>
<dbReference type="Pfam" id="PF01556">
    <property type="entry name" value="DnaJ_C"/>
    <property type="match status" value="1"/>
</dbReference>
<dbReference type="Pfam" id="PF00684">
    <property type="entry name" value="DnaJ_CXXCXGXG"/>
    <property type="match status" value="1"/>
</dbReference>
<dbReference type="PRINTS" id="PR00625">
    <property type="entry name" value="JDOMAIN"/>
</dbReference>
<dbReference type="SMART" id="SM00271">
    <property type="entry name" value="DnaJ"/>
    <property type="match status" value="1"/>
</dbReference>
<dbReference type="SUPFAM" id="SSF46565">
    <property type="entry name" value="Chaperone J-domain"/>
    <property type="match status" value="1"/>
</dbReference>
<dbReference type="SUPFAM" id="SSF57938">
    <property type="entry name" value="DnaJ/Hsp40 cysteine-rich domain"/>
    <property type="match status" value="1"/>
</dbReference>
<dbReference type="SUPFAM" id="SSF49493">
    <property type="entry name" value="HSP40/DnaJ peptide-binding domain"/>
    <property type="match status" value="2"/>
</dbReference>
<dbReference type="PROSITE" id="PS00636">
    <property type="entry name" value="DNAJ_1"/>
    <property type="match status" value="1"/>
</dbReference>
<dbReference type="PROSITE" id="PS50076">
    <property type="entry name" value="DNAJ_2"/>
    <property type="match status" value="1"/>
</dbReference>
<dbReference type="PROSITE" id="PS51188">
    <property type="entry name" value="ZF_CR"/>
    <property type="match status" value="1"/>
</dbReference>
<sequence length="380" mass="40916">MAKRDYYETLGVAKNASEEDIKKAYRKLAMKHHPDRNQGDGAKKAEESFKEAKEAYEMLSDAQKRAAYDQYGHAGVDPNMGGRGAGGPEAYGGFAEAFGDIFGDIFGQNGQRRGPGGQQVYRGNDLSYAMEITLEEAARGKDTQIRIPSWDSCSTCDGTGAKPGTSAKTCPTCSGSGQVHLRQGFFSIQQTCPSCHGTGKIIPEPCTACNGAGRIKSNKTLEVKIPAGINEGMRIRSAGNGEPGTNGGPAGDLYIEIRIKAHDIFERDGDDLHCTIPIGIATATLGGAIEVPTLGGKAEIELPEGTQHGKTFRLRGKGIKGVRSSYPGDLYCHVAVETPIKLTEHQRKLLRELDESLKKGGERHSPNAKSWTDRVKDLFK</sequence>
<keyword id="KW-0143">Chaperone</keyword>
<keyword id="KW-0963">Cytoplasm</keyword>
<keyword id="KW-0235">DNA replication</keyword>
<keyword id="KW-0479">Metal-binding</keyword>
<keyword id="KW-1185">Reference proteome</keyword>
<keyword id="KW-0677">Repeat</keyword>
<keyword id="KW-0346">Stress response</keyword>
<keyword id="KW-0862">Zinc</keyword>
<keyword id="KW-0863">Zinc-finger</keyword>
<protein>
    <recommendedName>
        <fullName evidence="1">Chaperone protein DnaJ</fullName>
    </recommendedName>
</protein>
<feature type="chain" id="PRO_1000085228" description="Chaperone protein DnaJ">
    <location>
        <begin position="1"/>
        <end position="380"/>
    </location>
</feature>
<feature type="domain" description="J" evidence="1">
    <location>
        <begin position="5"/>
        <end position="72"/>
    </location>
</feature>
<feature type="repeat" description="CXXCXGXG motif">
    <location>
        <begin position="153"/>
        <end position="160"/>
    </location>
</feature>
<feature type="repeat" description="CXXCXGXG motif">
    <location>
        <begin position="170"/>
        <end position="177"/>
    </location>
</feature>
<feature type="repeat" description="CXXCXGXG motif">
    <location>
        <begin position="192"/>
        <end position="199"/>
    </location>
</feature>
<feature type="repeat" description="CXXCXGXG motif">
    <location>
        <begin position="206"/>
        <end position="213"/>
    </location>
</feature>
<feature type="zinc finger region" description="CR-type" evidence="1">
    <location>
        <begin position="140"/>
        <end position="218"/>
    </location>
</feature>
<feature type="region of interest" description="Disordered" evidence="2">
    <location>
        <begin position="357"/>
        <end position="380"/>
    </location>
</feature>
<feature type="binding site" evidence="1">
    <location>
        <position position="153"/>
    </location>
    <ligand>
        <name>Zn(2+)</name>
        <dbReference type="ChEBI" id="CHEBI:29105"/>
        <label>1</label>
    </ligand>
</feature>
<feature type="binding site" evidence="1">
    <location>
        <position position="156"/>
    </location>
    <ligand>
        <name>Zn(2+)</name>
        <dbReference type="ChEBI" id="CHEBI:29105"/>
        <label>1</label>
    </ligand>
</feature>
<feature type="binding site" evidence="1">
    <location>
        <position position="170"/>
    </location>
    <ligand>
        <name>Zn(2+)</name>
        <dbReference type="ChEBI" id="CHEBI:29105"/>
        <label>2</label>
    </ligand>
</feature>
<feature type="binding site" evidence="1">
    <location>
        <position position="173"/>
    </location>
    <ligand>
        <name>Zn(2+)</name>
        <dbReference type="ChEBI" id="CHEBI:29105"/>
        <label>2</label>
    </ligand>
</feature>
<feature type="binding site" evidence="1">
    <location>
        <position position="192"/>
    </location>
    <ligand>
        <name>Zn(2+)</name>
        <dbReference type="ChEBI" id="CHEBI:29105"/>
        <label>2</label>
    </ligand>
</feature>
<feature type="binding site" evidence="1">
    <location>
        <position position="195"/>
    </location>
    <ligand>
        <name>Zn(2+)</name>
        <dbReference type="ChEBI" id="CHEBI:29105"/>
        <label>2</label>
    </ligand>
</feature>
<feature type="binding site" evidence="1">
    <location>
        <position position="206"/>
    </location>
    <ligand>
        <name>Zn(2+)</name>
        <dbReference type="ChEBI" id="CHEBI:29105"/>
        <label>1</label>
    </ligand>
</feature>
<feature type="binding site" evidence="1">
    <location>
        <position position="209"/>
    </location>
    <ligand>
        <name>Zn(2+)</name>
        <dbReference type="ChEBI" id="CHEBI:29105"/>
        <label>1</label>
    </ligand>
</feature>
<reference key="1">
    <citation type="journal article" date="2007" name="J. Bacteriol.">
        <title>Whole-genome analysis of the methyl tert-butyl ether-degrading beta-proteobacterium Methylibium petroleiphilum PM1.</title>
        <authorList>
            <person name="Kane S.R."/>
            <person name="Chakicherla A.Y."/>
            <person name="Chain P.S.G."/>
            <person name="Schmidt R."/>
            <person name="Shin M.W."/>
            <person name="Legler T.C."/>
            <person name="Scow K.M."/>
            <person name="Larimer F.W."/>
            <person name="Lucas S.M."/>
            <person name="Richardson P.M."/>
            <person name="Hristova K.R."/>
        </authorList>
    </citation>
    <scope>NUCLEOTIDE SEQUENCE [LARGE SCALE GENOMIC DNA]</scope>
    <source>
        <strain>ATCC BAA-1232 / LMG 22953 / PM1</strain>
    </source>
</reference>
<comment type="function">
    <text evidence="1">Participates actively in the response to hyperosmotic and heat shock by preventing the aggregation of stress-denatured proteins and by disaggregating proteins, also in an autonomous, DnaK-independent fashion. Unfolded proteins bind initially to DnaJ; upon interaction with the DnaJ-bound protein, DnaK hydrolyzes its bound ATP, resulting in the formation of a stable complex. GrpE releases ADP from DnaK; ATP binding to DnaK triggers the release of the substrate protein, thus completing the reaction cycle. Several rounds of ATP-dependent interactions between DnaJ, DnaK and GrpE are required for fully efficient folding. Also involved, together with DnaK and GrpE, in the DNA replication of plasmids through activation of initiation proteins.</text>
</comment>
<comment type="cofactor">
    <cofactor evidence="1">
        <name>Zn(2+)</name>
        <dbReference type="ChEBI" id="CHEBI:29105"/>
    </cofactor>
    <text evidence="1">Binds 2 Zn(2+) ions per monomer.</text>
</comment>
<comment type="subunit">
    <text evidence="1">Homodimer.</text>
</comment>
<comment type="subcellular location">
    <subcellularLocation>
        <location evidence="1">Cytoplasm</location>
    </subcellularLocation>
</comment>
<comment type="domain">
    <text evidence="1">The J domain is necessary and sufficient to stimulate DnaK ATPase activity. Zinc center 1 plays an important role in the autonomous, DnaK-independent chaperone activity of DnaJ. Zinc center 2 is essential for interaction with DnaK and for DnaJ activity.</text>
</comment>
<comment type="similarity">
    <text evidence="1">Belongs to the DnaJ family.</text>
</comment>
<organism>
    <name type="scientific">Methylibium petroleiphilum (strain ATCC BAA-1232 / LMG 22953 / PM1)</name>
    <dbReference type="NCBI Taxonomy" id="420662"/>
    <lineage>
        <taxon>Bacteria</taxon>
        <taxon>Pseudomonadati</taxon>
        <taxon>Pseudomonadota</taxon>
        <taxon>Betaproteobacteria</taxon>
        <taxon>Burkholderiales</taxon>
        <taxon>Sphaerotilaceae</taxon>
        <taxon>Methylibium</taxon>
    </lineage>
</organism>